<keyword id="KW-0963">Cytoplasm</keyword>
<keyword id="KW-0312">Gluconeogenesis</keyword>
<keyword id="KW-0324">Glycolysis</keyword>
<keyword id="KW-0413">Isomerase</keyword>
<keyword id="KW-1185">Reference proteome</keyword>
<comment type="function">
    <text evidence="1">Involved in the gluconeogenesis. Catalyzes stereospecifically the conversion of dihydroxyacetone phosphate (DHAP) to D-glyceraldehyde-3-phosphate (G3P).</text>
</comment>
<comment type="catalytic activity">
    <reaction evidence="1">
        <text>D-glyceraldehyde 3-phosphate = dihydroxyacetone phosphate</text>
        <dbReference type="Rhea" id="RHEA:18585"/>
        <dbReference type="ChEBI" id="CHEBI:57642"/>
        <dbReference type="ChEBI" id="CHEBI:59776"/>
        <dbReference type="EC" id="5.3.1.1"/>
    </reaction>
</comment>
<comment type="pathway">
    <text evidence="1">Carbohydrate biosynthesis; gluconeogenesis.</text>
</comment>
<comment type="pathway">
    <text evidence="1">Carbohydrate degradation; glycolysis; D-glyceraldehyde 3-phosphate from glycerone phosphate: step 1/1.</text>
</comment>
<comment type="subunit">
    <text evidence="1">Homodimer.</text>
</comment>
<comment type="subcellular location">
    <subcellularLocation>
        <location evidence="1">Cytoplasm</location>
    </subcellularLocation>
</comment>
<comment type="similarity">
    <text evidence="1">Belongs to the triosephosphate isomerase family.</text>
</comment>
<feature type="chain" id="PRO_0000090319" description="Triosephosphate isomerase">
    <location>
        <begin position="1"/>
        <end position="256"/>
    </location>
</feature>
<feature type="active site" description="Electrophile" evidence="1">
    <location>
        <position position="96"/>
    </location>
</feature>
<feature type="active site" description="Proton acceptor" evidence="1">
    <location>
        <position position="168"/>
    </location>
</feature>
<feature type="binding site" evidence="1">
    <location>
        <begin position="10"/>
        <end position="12"/>
    </location>
    <ligand>
        <name>substrate</name>
    </ligand>
</feature>
<feature type="binding site" evidence="1">
    <location>
        <position position="174"/>
    </location>
    <ligand>
        <name>substrate</name>
    </ligand>
</feature>
<feature type="binding site" evidence="1">
    <location>
        <position position="213"/>
    </location>
    <ligand>
        <name>substrate</name>
    </ligand>
</feature>
<dbReference type="EC" id="5.3.1.1" evidence="1"/>
<dbReference type="EMBL" id="BA000021">
    <property type="protein sequence ID" value="BAC24420.1"/>
    <property type="molecule type" value="Genomic_DNA"/>
</dbReference>
<dbReference type="SMR" id="Q8D2T0"/>
<dbReference type="STRING" id="36870.gene:10368767"/>
<dbReference type="KEGG" id="wbr:tpiA"/>
<dbReference type="eggNOG" id="COG0149">
    <property type="taxonomic scope" value="Bacteria"/>
</dbReference>
<dbReference type="HOGENOM" id="CLU_024251_2_1_6"/>
<dbReference type="OrthoDB" id="9809429at2"/>
<dbReference type="UniPathway" id="UPA00109">
    <property type="reaction ID" value="UER00189"/>
</dbReference>
<dbReference type="UniPathway" id="UPA00138"/>
<dbReference type="Proteomes" id="UP000000562">
    <property type="component" value="Chromosome"/>
</dbReference>
<dbReference type="GO" id="GO:0005829">
    <property type="term" value="C:cytosol"/>
    <property type="evidence" value="ECO:0007669"/>
    <property type="project" value="TreeGrafter"/>
</dbReference>
<dbReference type="GO" id="GO:0004807">
    <property type="term" value="F:triose-phosphate isomerase activity"/>
    <property type="evidence" value="ECO:0007669"/>
    <property type="project" value="UniProtKB-UniRule"/>
</dbReference>
<dbReference type="GO" id="GO:0006094">
    <property type="term" value="P:gluconeogenesis"/>
    <property type="evidence" value="ECO:0007669"/>
    <property type="project" value="UniProtKB-UniRule"/>
</dbReference>
<dbReference type="GO" id="GO:0046166">
    <property type="term" value="P:glyceraldehyde-3-phosphate biosynthetic process"/>
    <property type="evidence" value="ECO:0007669"/>
    <property type="project" value="TreeGrafter"/>
</dbReference>
<dbReference type="GO" id="GO:0019563">
    <property type="term" value="P:glycerol catabolic process"/>
    <property type="evidence" value="ECO:0007669"/>
    <property type="project" value="TreeGrafter"/>
</dbReference>
<dbReference type="GO" id="GO:0006096">
    <property type="term" value="P:glycolytic process"/>
    <property type="evidence" value="ECO:0007669"/>
    <property type="project" value="UniProtKB-UniRule"/>
</dbReference>
<dbReference type="CDD" id="cd00311">
    <property type="entry name" value="TIM"/>
    <property type="match status" value="1"/>
</dbReference>
<dbReference type="Gene3D" id="3.20.20.70">
    <property type="entry name" value="Aldolase class I"/>
    <property type="match status" value="1"/>
</dbReference>
<dbReference type="HAMAP" id="MF_00147_B">
    <property type="entry name" value="TIM_B"/>
    <property type="match status" value="1"/>
</dbReference>
<dbReference type="InterPro" id="IPR013785">
    <property type="entry name" value="Aldolase_TIM"/>
</dbReference>
<dbReference type="InterPro" id="IPR035990">
    <property type="entry name" value="TIM_sf"/>
</dbReference>
<dbReference type="InterPro" id="IPR022896">
    <property type="entry name" value="TrioseP_Isoase_bac/euk"/>
</dbReference>
<dbReference type="InterPro" id="IPR000652">
    <property type="entry name" value="Triosephosphate_isomerase"/>
</dbReference>
<dbReference type="InterPro" id="IPR020861">
    <property type="entry name" value="Triosephosphate_isomerase_AS"/>
</dbReference>
<dbReference type="NCBIfam" id="TIGR00419">
    <property type="entry name" value="tim"/>
    <property type="match status" value="1"/>
</dbReference>
<dbReference type="PANTHER" id="PTHR21139">
    <property type="entry name" value="TRIOSEPHOSPHATE ISOMERASE"/>
    <property type="match status" value="1"/>
</dbReference>
<dbReference type="PANTHER" id="PTHR21139:SF42">
    <property type="entry name" value="TRIOSEPHOSPHATE ISOMERASE"/>
    <property type="match status" value="1"/>
</dbReference>
<dbReference type="Pfam" id="PF00121">
    <property type="entry name" value="TIM"/>
    <property type="match status" value="1"/>
</dbReference>
<dbReference type="SUPFAM" id="SSF51351">
    <property type="entry name" value="Triosephosphate isomerase (TIM)"/>
    <property type="match status" value="1"/>
</dbReference>
<dbReference type="PROSITE" id="PS00171">
    <property type="entry name" value="TIM_1"/>
    <property type="match status" value="1"/>
</dbReference>
<dbReference type="PROSITE" id="PS51440">
    <property type="entry name" value="TIM_2"/>
    <property type="match status" value="1"/>
</dbReference>
<protein>
    <recommendedName>
        <fullName evidence="1">Triosephosphate isomerase</fullName>
        <shortName evidence="1">TIM</shortName>
        <shortName evidence="1">TPI</shortName>
        <ecNumber evidence="1">5.3.1.1</ecNumber>
    </recommendedName>
    <alternativeName>
        <fullName evidence="1">Triose-phosphate isomerase</fullName>
    </alternativeName>
</protein>
<proteinExistence type="inferred from homology"/>
<reference key="1">
    <citation type="journal article" date="2002" name="Nat. Genet.">
        <title>Genome sequence of the endocellular obligate symbiont of tsetse flies, Wigglesworthia glossinidia.</title>
        <authorList>
            <person name="Akman L."/>
            <person name="Yamashita A."/>
            <person name="Watanabe H."/>
            <person name="Oshima K."/>
            <person name="Shiba T."/>
            <person name="Hattori M."/>
            <person name="Aksoy S."/>
        </authorList>
    </citation>
    <scope>NUCLEOTIDE SEQUENCE [LARGE SCALE GENOMIC DNA]</scope>
</reference>
<sequence length="256" mass="29396">MKLKPLILSNWKLNGNCLLVKKILLKLNEKLKNKNNLKVVIAPPVIYLSEFKKYVLKKNIFLAAQNVDVNLTGSFTGEISPIMLYEFGVKYVIIGHSERRLYHNESIEDVTKKFLILKKFNLIPVLCIGETKKNKDDKCIENEIVKQIDFILKKIGIEGFINTVIAYEPTWAIGKKDSASPKYIQKIHKFIRNYLSKYDNDISKKIILQYGGSVNSKNVKKIISQKDVNGVLLGRSSTNIEEFLYILDIIEKTKKS</sequence>
<name>TPIS_WIGBR</name>
<evidence type="ECO:0000255" key="1">
    <source>
        <dbReference type="HAMAP-Rule" id="MF_00147"/>
    </source>
</evidence>
<gene>
    <name evidence="1" type="primary">tpiA</name>
    <name type="ordered locus">WIGBR2740</name>
</gene>
<organism>
    <name type="scientific">Wigglesworthia glossinidia brevipalpis</name>
    <dbReference type="NCBI Taxonomy" id="36870"/>
    <lineage>
        <taxon>Bacteria</taxon>
        <taxon>Pseudomonadati</taxon>
        <taxon>Pseudomonadota</taxon>
        <taxon>Gammaproteobacteria</taxon>
        <taxon>Enterobacterales</taxon>
        <taxon>Erwiniaceae</taxon>
        <taxon>Wigglesworthia</taxon>
    </lineage>
</organism>
<accession>Q8D2T0</accession>